<proteinExistence type="inferred from homology"/>
<name>COX3_TACAC</name>
<sequence length="261" mass="29814">MTHQTHAYHMVNPSPWPLTGALSALLLTSGLMMWFHFNNPTLLVLGLLTNLISSYQWWRDIVREGTYQGHHTKVVQKGLRYGMVLFIISEVFFFLGFFWAFYHSSLAPTPELGGCWPPTGISPLNPLEVPLLNTSILLASGVSITWSHHSLMEGNRKQMIQALMITIALGLYFTALQAMEYYESSFTISDGVYGSTFFVATGFHGLHVIIGTTFLITCLLRQLLYHFTSNHHFGFEAAAWYWHFVDVVWLFLYVSIYWWGS</sequence>
<organism>
    <name type="scientific">Tachyglossus aculeatus aculeatus</name>
    <name type="common">Southeast Australian short-beaked echidna</name>
    <dbReference type="NCBI Taxonomy" id="49271"/>
    <lineage>
        <taxon>Eukaryota</taxon>
        <taxon>Metazoa</taxon>
        <taxon>Chordata</taxon>
        <taxon>Craniata</taxon>
        <taxon>Vertebrata</taxon>
        <taxon>Euteleostomi</taxon>
        <taxon>Mammalia</taxon>
        <taxon>Monotremata</taxon>
        <taxon>Tachyglossidae</taxon>
        <taxon>Tachyglossus</taxon>
    </lineage>
</organism>
<comment type="function">
    <text evidence="2">Component of the cytochrome c oxidase, the last enzyme in the mitochondrial electron transport chain which drives oxidative phosphorylation. The respiratory chain contains 3 multisubunit complexes succinate dehydrogenase (complex II, CII), ubiquinol-cytochrome c oxidoreductase (cytochrome b-c1 complex, complex III, CIII) and cytochrome c oxidase (complex IV, CIV), that cooperate to transfer electrons derived from NADH and succinate to molecular oxygen, creating an electrochemical gradient over the inner membrane that drives transmembrane transport and the ATP synthase. Cytochrome c oxidase is the component of the respiratory chain that catalyzes the reduction of oxygen to water. Electrons originating from reduced cytochrome c in the intermembrane space (IMS) are transferred via the dinuclear copper A center (CU(A)) of subunit 2 and heme A of subunit 1 to the active site in subunit 1, a binuclear center (BNC) formed by heme A3 and copper B (CU(B)). The BNC reduces molecular oxygen to 2 water molecules using 4 electrons from cytochrome c in the IMS and 4 protons from the mitochondrial matrix.</text>
</comment>
<comment type="catalytic activity">
    <reaction evidence="2">
        <text>4 Fe(II)-[cytochrome c] + O2 + 8 H(+)(in) = 4 Fe(III)-[cytochrome c] + 2 H2O + 4 H(+)(out)</text>
        <dbReference type="Rhea" id="RHEA:11436"/>
        <dbReference type="Rhea" id="RHEA-COMP:10350"/>
        <dbReference type="Rhea" id="RHEA-COMP:14399"/>
        <dbReference type="ChEBI" id="CHEBI:15377"/>
        <dbReference type="ChEBI" id="CHEBI:15378"/>
        <dbReference type="ChEBI" id="CHEBI:15379"/>
        <dbReference type="ChEBI" id="CHEBI:29033"/>
        <dbReference type="ChEBI" id="CHEBI:29034"/>
        <dbReference type="EC" id="7.1.1.9"/>
    </reaction>
    <physiologicalReaction direction="left-to-right" evidence="2">
        <dbReference type="Rhea" id="RHEA:11437"/>
    </physiologicalReaction>
</comment>
<comment type="subunit">
    <text evidence="1">Component of the cytochrome c oxidase (complex IV, CIV), a multisubunit enzyme composed of 14 subunits. The complex is composed of a catalytic core of 3 subunits MT-CO1, MT-CO2 and MT-CO3, encoded in the mitochondrial DNA, and 11 supernumerary subunits COX4I, COX5A, COX5B, COX6A, COX6B, COX6C, COX7A, COX7B, COX7C, COX8 and NDUFA4, which are encoded in the nuclear genome. The complex exists as a monomer or a dimer and forms supercomplexes (SCs) in the inner mitochondrial membrane with NADH-ubiquinone oxidoreductase (complex I, CI) and ubiquinol-cytochrome c oxidoreductase (cytochrome b-c1 complex, complex III, CIII), resulting in different assemblies (supercomplex SCI(1)III(2)IV(1) and megacomplex MCI(2)III(2)IV(2)).</text>
</comment>
<comment type="subcellular location">
    <subcellularLocation>
        <location evidence="1">Mitochondrion inner membrane</location>
        <topology evidence="1">Multi-pass membrane protein</topology>
    </subcellularLocation>
</comment>
<comment type="similarity">
    <text evidence="3">Belongs to the cytochrome c oxidase subunit 3 family.</text>
</comment>
<protein>
    <recommendedName>
        <fullName>Cytochrome c oxidase subunit 3</fullName>
        <ecNumber>7.1.1.9</ecNumber>
    </recommendedName>
    <alternativeName>
        <fullName>Cytochrome c oxidase polypeptide III</fullName>
    </alternativeName>
</protein>
<reference key="1">
    <citation type="journal article" date="2002" name="J. Mol. Evol.">
        <title>Phylogenetic analysis of 18S rRNA and the mitochondrial genomes of the wombat, Vombatus ursinus, and the spiny anteater, Tachyglossus aculeatus: increased support for the Marsupionta hypothesis.</title>
        <authorList>
            <person name="Janke A."/>
            <person name="Magnell O."/>
            <person name="Wieczorek G."/>
            <person name="Westerman M."/>
            <person name="Arnason U."/>
        </authorList>
    </citation>
    <scope>NUCLEOTIDE SEQUENCE [GENOMIC DNA]</scope>
    <source>
        <tissue>Liver</tissue>
    </source>
</reference>
<dbReference type="EC" id="7.1.1.9"/>
<dbReference type="EMBL" id="AJ303116">
    <property type="protein sequence ID" value="CAC88016.1"/>
    <property type="molecule type" value="Genomic_DNA"/>
</dbReference>
<dbReference type="SMR" id="Q8W9G7"/>
<dbReference type="CTD" id="4514"/>
<dbReference type="GO" id="GO:0005743">
    <property type="term" value="C:mitochondrial inner membrane"/>
    <property type="evidence" value="ECO:0007669"/>
    <property type="project" value="UniProtKB-SubCell"/>
</dbReference>
<dbReference type="GO" id="GO:0045277">
    <property type="term" value="C:respiratory chain complex IV"/>
    <property type="evidence" value="ECO:0000250"/>
    <property type="project" value="UniProtKB"/>
</dbReference>
<dbReference type="GO" id="GO:0004129">
    <property type="term" value="F:cytochrome-c oxidase activity"/>
    <property type="evidence" value="ECO:0007669"/>
    <property type="project" value="UniProtKB-EC"/>
</dbReference>
<dbReference type="GO" id="GO:0006123">
    <property type="term" value="P:mitochondrial electron transport, cytochrome c to oxygen"/>
    <property type="evidence" value="ECO:0007669"/>
    <property type="project" value="TreeGrafter"/>
</dbReference>
<dbReference type="GO" id="GO:0008535">
    <property type="term" value="P:respiratory chain complex IV assembly"/>
    <property type="evidence" value="ECO:0000250"/>
    <property type="project" value="UniProtKB"/>
</dbReference>
<dbReference type="CDD" id="cd01665">
    <property type="entry name" value="Cyt_c_Oxidase_III"/>
    <property type="match status" value="1"/>
</dbReference>
<dbReference type="FunFam" id="1.10.287.70:FF:000048">
    <property type="entry name" value="Cytochrome c oxidase subunit 3"/>
    <property type="match status" value="1"/>
</dbReference>
<dbReference type="FunFam" id="1.20.120.80:FF:000002">
    <property type="entry name" value="Cytochrome c oxidase subunit 3"/>
    <property type="match status" value="1"/>
</dbReference>
<dbReference type="Gene3D" id="1.10.287.70">
    <property type="match status" value="1"/>
</dbReference>
<dbReference type="Gene3D" id="1.20.120.80">
    <property type="entry name" value="Cytochrome c oxidase, subunit III, four-helix bundle"/>
    <property type="match status" value="1"/>
</dbReference>
<dbReference type="InterPro" id="IPR024791">
    <property type="entry name" value="Cyt_c/ubiquinol_Oxase_su3"/>
</dbReference>
<dbReference type="InterPro" id="IPR033945">
    <property type="entry name" value="Cyt_c_oxase_su3_dom"/>
</dbReference>
<dbReference type="InterPro" id="IPR000298">
    <property type="entry name" value="Cyt_c_oxidase-like_su3"/>
</dbReference>
<dbReference type="InterPro" id="IPR035973">
    <property type="entry name" value="Cyt_c_oxidase_su3-like_sf"/>
</dbReference>
<dbReference type="InterPro" id="IPR013833">
    <property type="entry name" value="Cyt_c_oxidase_su3_a-hlx"/>
</dbReference>
<dbReference type="PANTHER" id="PTHR11403:SF7">
    <property type="entry name" value="CYTOCHROME C OXIDASE SUBUNIT 3"/>
    <property type="match status" value="1"/>
</dbReference>
<dbReference type="PANTHER" id="PTHR11403">
    <property type="entry name" value="CYTOCHROME C OXIDASE SUBUNIT III"/>
    <property type="match status" value="1"/>
</dbReference>
<dbReference type="Pfam" id="PF00510">
    <property type="entry name" value="COX3"/>
    <property type="match status" value="1"/>
</dbReference>
<dbReference type="SUPFAM" id="SSF81452">
    <property type="entry name" value="Cytochrome c oxidase subunit III-like"/>
    <property type="match status" value="1"/>
</dbReference>
<dbReference type="PROSITE" id="PS50253">
    <property type="entry name" value="COX3"/>
    <property type="match status" value="1"/>
</dbReference>
<evidence type="ECO:0000250" key="1">
    <source>
        <dbReference type="UniProtKB" id="P00415"/>
    </source>
</evidence>
<evidence type="ECO:0000250" key="2">
    <source>
        <dbReference type="UniProtKB" id="P00420"/>
    </source>
</evidence>
<evidence type="ECO:0000305" key="3"/>
<keyword id="KW-0472">Membrane</keyword>
<keyword id="KW-0496">Mitochondrion</keyword>
<keyword id="KW-0999">Mitochondrion inner membrane</keyword>
<keyword id="KW-1278">Translocase</keyword>
<keyword id="KW-0812">Transmembrane</keyword>
<keyword id="KW-1133">Transmembrane helix</keyword>
<geneLocation type="mitochondrion"/>
<feature type="chain" id="PRO_0000183860" description="Cytochrome c oxidase subunit 3">
    <location>
        <begin position="1"/>
        <end position="261"/>
    </location>
</feature>
<feature type="topological domain" description="Mitochondrial matrix" evidence="1">
    <location>
        <begin position="1"/>
        <end position="15"/>
    </location>
</feature>
<feature type="transmembrane region" description="Helical; Name=I" evidence="1">
    <location>
        <begin position="16"/>
        <end position="34"/>
    </location>
</feature>
<feature type="topological domain" description="Mitochondrial intermembrane" evidence="1">
    <location>
        <begin position="35"/>
        <end position="40"/>
    </location>
</feature>
<feature type="transmembrane region" description="Helical; Name=II" evidence="1">
    <location>
        <begin position="41"/>
        <end position="66"/>
    </location>
</feature>
<feature type="topological domain" description="Mitochondrial matrix" evidence="1">
    <location>
        <begin position="67"/>
        <end position="72"/>
    </location>
</feature>
<feature type="transmembrane region" description="Helical; Name=III" evidence="1">
    <location>
        <begin position="73"/>
        <end position="105"/>
    </location>
</feature>
<feature type="topological domain" description="Mitochondrial intermembrane" evidence="1">
    <location>
        <begin position="106"/>
        <end position="128"/>
    </location>
</feature>
<feature type="transmembrane region" description="Helical; Name=IV" evidence="1">
    <location>
        <begin position="129"/>
        <end position="152"/>
    </location>
</feature>
<feature type="topological domain" description="Mitochondrial matrix" evidence="1">
    <location>
        <begin position="153"/>
        <end position="155"/>
    </location>
</feature>
<feature type="transmembrane region" description="Helical; Name=V" evidence="1">
    <location>
        <begin position="156"/>
        <end position="183"/>
    </location>
</feature>
<feature type="topological domain" description="Mitochondrial intermembrane" evidence="1">
    <location>
        <begin position="184"/>
        <end position="190"/>
    </location>
</feature>
<feature type="transmembrane region" description="Helical; Name=VI" evidence="1">
    <location>
        <begin position="191"/>
        <end position="223"/>
    </location>
</feature>
<feature type="topological domain" description="Mitochondrial matrix" evidence="1">
    <location>
        <begin position="224"/>
        <end position="232"/>
    </location>
</feature>
<feature type="transmembrane region" description="Helical; Name=VII" evidence="1">
    <location>
        <begin position="233"/>
        <end position="256"/>
    </location>
</feature>
<feature type="topological domain" description="Mitochondrial intermembrane" evidence="1">
    <location>
        <begin position="257"/>
        <end position="261"/>
    </location>
</feature>
<gene>
    <name type="primary">MT-CO3</name>
    <name type="synonym">COIII</name>
    <name type="synonym">COXIII</name>
    <name type="synonym">MTCO3</name>
</gene>
<accession>Q8W9G7</accession>